<gene>
    <name evidence="1" type="primary">cobQ</name>
    <name type="ordered locus">SeHA_C2241</name>
</gene>
<comment type="function">
    <text evidence="1">Catalyzes amidations at positions B, D, E, and G on adenosylcobyrinic A,C-diamide. NH(2) groups are provided by glutamine, and one molecule of ATP is hydrogenolyzed for each amidation.</text>
</comment>
<comment type="pathway">
    <text evidence="1">Cofactor biosynthesis; adenosylcobalamin biosynthesis.</text>
</comment>
<comment type="similarity">
    <text evidence="1">Belongs to the CobB/CobQ family. CobQ subfamily.</text>
</comment>
<dbReference type="EMBL" id="CP001120">
    <property type="protein sequence ID" value="ACF70029.1"/>
    <property type="molecule type" value="Genomic_DNA"/>
</dbReference>
<dbReference type="RefSeq" id="WP_000189676.1">
    <property type="nucleotide sequence ID" value="NC_011083.1"/>
</dbReference>
<dbReference type="SMR" id="B4T8X1"/>
<dbReference type="KEGG" id="seh:SeHA_C2241"/>
<dbReference type="HOGENOM" id="CLU_019250_2_2_6"/>
<dbReference type="UniPathway" id="UPA00148"/>
<dbReference type="Proteomes" id="UP000001866">
    <property type="component" value="Chromosome"/>
</dbReference>
<dbReference type="GO" id="GO:0015420">
    <property type="term" value="F:ABC-type vitamin B12 transporter activity"/>
    <property type="evidence" value="ECO:0007669"/>
    <property type="project" value="UniProtKB-UniRule"/>
</dbReference>
<dbReference type="GO" id="GO:0003824">
    <property type="term" value="F:catalytic activity"/>
    <property type="evidence" value="ECO:0007669"/>
    <property type="project" value="InterPro"/>
</dbReference>
<dbReference type="GO" id="GO:0009236">
    <property type="term" value="P:cobalamin biosynthetic process"/>
    <property type="evidence" value="ECO:0007669"/>
    <property type="project" value="UniProtKB-UniRule"/>
</dbReference>
<dbReference type="CDD" id="cd05389">
    <property type="entry name" value="CobQ_N"/>
    <property type="match status" value="1"/>
</dbReference>
<dbReference type="CDD" id="cd01750">
    <property type="entry name" value="GATase1_CobQ"/>
    <property type="match status" value="1"/>
</dbReference>
<dbReference type="Gene3D" id="3.40.50.880">
    <property type="match status" value="1"/>
</dbReference>
<dbReference type="Gene3D" id="3.40.50.300">
    <property type="entry name" value="P-loop containing nucleotide triphosphate hydrolases"/>
    <property type="match status" value="1"/>
</dbReference>
<dbReference type="HAMAP" id="MF_00028">
    <property type="entry name" value="CobQ"/>
    <property type="match status" value="1"/>
</dbReference>
<dbReference type="InterPro" id="IPR029062">
    <property type="entry name" value="Class_I_gatase-like"/>
</dbReference>
<dbReference type="InterPro" id="IPR002586">
    <property type="entry name" value="CobQ/CobB/MinD/ParA_Nub-bd_dom"/>
</dbReference>
<dbReference type="InterPro" id="IPR033949">
    <property type="entry name" value="CobQ_GATase1"/>
</dbReference>
<dbReference type="InterPro" id="IPR047045">
    <property type="entry name" value="CobQ_N"/>
</dbReference>
<dbReference type="InterPro" id="IPR004459">
    <property type="entry name" value="CobQ_synth"/>
</dbReference>
<dbReference type="InterPro" id="IPR011698">
    <property type="entry name" value="GATase_3"/>
</dbReference>
<dbReference type="InterPro" id="IPR027417">
    <property type="entry name" value="P-loop_NTPase"/>
</dbReference>
<dbReference type="NCBIfam" id="TIGR00313">
    <property type="entry name" value="cobQ"/>
    <property type="match status" value="1"/>
</dbReference>
<dbReference type="NCBIfam" id="NF001989">
    <property type="entry name" value="PRK00784.1"/>
    <property type="match status" value="1"/>
</dbReference>
<dbReference type="PANTHER" id="PTHR21343:SF1">
    <property type="entry name" value="COBYRIC ACID SYNTHASE"/>
    <property type="match status" value="1"/>
</dbReference>
<dbReference type="PANTHER" id="PTHR21343">
    <property type="entry name" value="DETHIOBIOTIN SYNTHETASE"/>
    <property type="match status" value="1"/>
</dbReference>
<dbReference type="Pfam" id="PF01656">
    <property type="entry name" value="CbiA"/>
    <property type="match status" value="1"/>
</dbReference>
<dbReference type="Pfam" id="PF07685">
    <property type="entry name" value="GATase_3"/>
    <property type="match status" value="1"/>
</dbReference>
<dbReference type="SUPFAM" id="SSF52317">
    <property type="entry name" value="Class I glutamine amidotransferase-like"/>
    <property type="match status" value="1"/>
</dbReference>
<dbReference type="SUPFAM" id="SSF52540">
    <property type="entry name" value="P-loop containing nucleoside triphosphate hydrolases"/>
    <property type="match status" value="1"/>
</dbReference>
<dbReference type="PROSITE" id="PS51274">
    <property type="entry name" value="GATASE_COBBQ"/>
    <property type="match status" value="1"/>
</dbReference>
<keyword id="KW-0169">Cobalamin biosynthesis</keyword>
<keyword id="KW-0315">Glutamine amidotransferase</keyword>
<organism>
    <name type="scientific">Salmonella heidelberg (strain SL476)</name>
    <dbReference type="NCBI Taxonomy" id="454169"/>
    <lineage>
        <taxon>Bacteria</taxon>
        <taxon>Pseudomonadati</taxon>
        <taxon>Pseudomonadota</taxon>
        <taxon>Gammaproteobacteria</taxon>
        <taxon>Enterobacterales</taxon>
        <taxon>Enterobacteriaceae</taxon>
        <taxon>Salmonella</taxon>
    </lineage>
</organism>
<sequence>MTQAVMLQGTASDVGKSVLVAGLCRIFYQDGLRTAPFKSQNMALNSGITPDGKEMGRAQIFQAEAAGITPDVRMNPVLLKPTSDRQAQVVLMGKVATNMDAVSYHDYKPRLREQILAVYNSLAQEYDVIVLEGAGSPAEINLRDRDIVNMGMAEMAQCPVILVADIDRGGVFAAIYGTLALLHKQERDRVKGVIINKFRGDVALLYSGIEQIESLTGVPVLGVMPWLDVDLEDEDGVALQNDKYRGNAPRDITIAIVQLPHISNFTDFNALAAQPDVRIRYIRRPEALTDADLVILPGSKNTLSDLAWLRESGMADAVLQTHRQGVPVMGICGGYQMLGDTIVDEVESGLGTQPGLGLLNTITRFAQDKTTTQVNATMSGELPGWLAAAAGLPVRGYEIHMGETVLQEGCCTAMTLQKNGCSVADGAVTADGLAFGTYLHGLFDSDAFTRAVVNGLRARKGLAPWETTFCYAEHKARQFDLLAEAMRQHIDIDKIYTIMQQHQEPV</sequence>
<reference key="1">
    <citation type="journal article" date="2011" name="J. Bacteriol.">
        <title>Comparative genomics of 28 Salmonella enterica isolates: evidence for CRISPR-mediated adaptive sublineage evolution.</title>
        <authorList>
            <person name="Fricke W.F."/>
            <person name="Mammel M.K."/>
            <person name="McDermott P.F."/>
            <person name="Tartera C."/>
            <person name="White D.G."/>
            <person name="Leclerc J.E."/>
            <person name="Ravel J."/>
            <person name="Cebula T.A."/>
        </authorList>
    </citation>
    <scope>NUCLEOTIDE SEQUENCE [LARGE SCALE GENOMIC DNA]</scope>
    <source>
        <strain>SL476</strain>
    </source>
</reference>
<proteinExistence type="inferred from homology"/>
<protein>
    <recommendedName>
        <fullName evidence="1">Cobyric acid synthase</fullName>
    </recommendedName>
</protein>
<accession>B4T8X1</accession>
<evidence type="ECO:0000255" key="1">
    <source>
        <dbReference type="HAMAP-Rule" id="MF_00028"/>
    </source>
</evidence>
<feature type="chain" id="PRO_1000090247" description="Cobyric acid synthase">
    <location>
        <begin position="1"/>
        <end position="506"/>
    </location>
</feature>
<feature type="domain" description="GATase cobBQ-type" evidence="1">
    <location>
        <begin position="251"/>
        <end position="448"/>
    </location>
</feature>
<feature type="active site" description="Nucleophile" evidence="1">
    <location>
        <position position="332"/>
    </location>
</feature>
<feature type="active site" evidence="1">
    <location>
        <position position="440"/>
    </location>
</feature>
<name>COBQ_SALHS</name>